<keyword id="KW-1032">Host cell membrane</keyword>
<keyword id="KW-1043">Host membrane</keyword>
<keyword id="KW-0472">Membrane</keyword>
<keyword id="KW-0964">Secreted</keyword>
<keyword id="KW-0732">Signal</keyword>
<keyword id="KW-0843">Virulence</keyword>
<organism>
    <name type="scientific">Plasmopara viticola</name>
    <name type="common">Downy mildew of grapevine</name>
    <name type="synonym">Botrytis viticola</name>
    <dbReference type="NCBI Taxonomy" id="143451"/>
    <lineage>
        <taxon>Eukaryota</taxon>
        <taxon>Sar</taxon>
        <taxon>Stramenopiles</taxon>
        <taxon>Oomycota</taxon>
        <taxon>Peronosporales</taxon>
        <taxon>Peronosporaceae</taxon>
        <taxon>Plasmopara</taxon>
    </lineage>
</organism>
<dbReference type="SMR" id="P0CV68"/>
<dbReference type="GO" id="GO:0005576">
    <property type="term" value="C:extracellular region"/>
    <property type="evidence" value="ECO:0007669"/>
    <property type="project" value="UniProtKB-SubCell"/>
</dbReference>
<dbReference type="GO" id="GO:0020002">
    <property type="term" value="C:host cell plasma membrane"/>
    <property type="evidence" value="ECO:0007669"/>
    <property type="project" value="UniProtKB-SubCell"/>
</dbReference>
<dbReference type="GO" id="GO:0016020">
    <property type="term" value="C:membrane"/>
    <property type="evidence" value="ECO:0007669"/>
    <property type="project" value="UniProtKB-KW"/>
</dbReference>
<proteinExistence type="evidence at transcript level"/>
<comment type="function">
    <text evidence="2">Secreted effector that completely suppresses the host cell death induced by cell death-inducing proteins.</text>
</comment>
<comment type="subcellular location">
    <subcellularLocation>
        <location evidence="2">Secreted</location>
    </subcellularLocation>
    <subcellularLocation>
        <location evidence="2">Host cell membrane</location>
    </subcellularLocation>
</comment>
<comment type="domain">
    <text evidence="5">The RxLR-dEER motif acts to carry the protein into the host cell cytoplasm through binding to cell surface phosphatidylinositol-3-phosphate.</text>
</comment>
<comment type="similarity">
    <text evidence="4">Belongs to the RxLR effector family.</text>
</comment>
<feature type="signal peptide" evidence="1">
    <location>
        <begin position="1"/>
        <end position="18"/>
    </location>
</feature>
<feature type="chain" id="PRO_0000447978" description="Secreted RxLR effector protein 154">
    <location>
        <begin position="19"/>
        <end position="261"/>
    </location>
</feature>
<feature type="short sequence motif" description="RxLR-dEER" evidence="5">
    <location>
        <begin position="49"/>
        <end position="64"/>
    </location>
</feature>
<evidence type="ECO:0000255" key="1"/>
<evidence type="ECO:0000269" key="2">
    <source>
    </source>
</evidence>
<evidence type="ECO:0000303" key="3">
    <source>
    </source>
</evidence>
<evidence type="ECO:0000305" key="4"/>
<evidence type="ECO:0000305" key="5">
    <source>
    </source>
</evidence>
<gene>
    <name evidence="3" type="primary">RXLR154</name>
</gene>
<accession>P0CV68</accession>
<protein>
    <recommendedName>
        <fullName evidence="3">Secreted RxLR effector protein 154</fullName>
    </recommendedName>
</protein>
<sequence>MRRCALLFRLFLISYSCSVYFSACTQASSLKEPDEELPRAEQWDDNGKRILQADDPEHIRTEERGITQNLKPAAESIGKVKAAGKAIKTSVLNSKLMNWVKTALRKGYTAWQLVKMYSLSKGGGVSAMMSGITPLTYKTVYGRTIASKVDVKEKFDTFKTEYFKLFEDLDNVKPSSGMQYWDDELKKLPWTRQFTARLALNKVRKILKSDPSVEKMIDLNVSPLLYMRALEKQGAFARNDVAAINKLKDYVKAFKKHVDLA</sequence>
<reference key="1">
    <citation type="journal article" date="2018" name="Front. Plant Sci.">
        <title>In planta functional analysis and subcellular localization of the oomycete pathogen Plasmopara viticola candidate RXLR effector repertoire.</title>
        <authorList>
            <person name="Liu Y."/>
            <person name="Lan X."/>
            <person name="Song S."/>
            <person name="Yin L."/>
            <person name="Dry I.B."/>
            <person name="Qu J."/>
            <person name="Xiang J."/>
            <person name="Lu J."/>
        </authorList>
    </citation>
    <scope>NUCLEOTIDE SEQUENCE [MRNA]</scope>
    <scope>DOMAIN</scope>
    <scope>FUNCTION</scope>
    <scope>SUBCELLULAR LOCATION</scope>
</reference>
<name>RL154_PLAVT</name>